<sequence length="352" mass="37029">MSDSPVTLPESIKLTEYSHGAGCGCKISPKVLSTILASQLPVFTDPNLLVGNQSRDDAAVYKLNDDIGIISTTDFFMPIVDDPFTFGRIAATNAISDIYAMGGTPIMAIAILGWPINKLPAEVAQQVVDGGRQACMEAGIMLAGGHSIDAPEPIFGLAVTGQIALTDLKQNDTAKAGDRLYLTKPIGIGILTTAQKQKKLQDEDSHIAVNAMCQLNTIGTTIAKISGVNALTDVTGFGLAGHLLEMCQGAKLTAKLKFDAVPLLPRALDYLALGCVPGGTHRNYDSYGEHLPELSEHQKAILCDPQTSGGLLVAVSAEAEAELIALLDAHHIAPICIGSLETPTTEANVVLY</sequence>
<keyword id="KW-0067">ATP-binding</keyword>
<keyword id="KW-0418">Kinase</keyword>
<keyword id="KW-0460">Magnesium</keyword>
<keyword id="KW-0479">Metal-binding</keyword>
<keyword id="KW-0547">Nucleotide-binding</keyword>
<keyword id="KW-0711">Selenium</keyword>
<keyword id="KW-0808">Transferase</keyword>
<protein>
    <recommendedName>
        <fullName evidence="1">Selenide, water dikinase</fullName>
        <ecNumber evidence="1">2.7.9.3</ecNumber>
    </recommendedName>
    <alternativeName>
        <fullName evidence="1">Selenium donor protein</fullName>
    </alternativeName>
    <alternativeName>
        <fullName evidence="1">Selenophosphate synthase</fullName>
    </alternativeName>
</protein>
<feature type="chain" id="PRO_1000082605" description="Selenide, water dikinase">
    <location>
        <begin position="1"/>
        <end position="352"/>
    </location>
</feature>
<feature type="active site" evidence="1">
    <location>
        <position position="23"/>
    </location>
</feature>
<feature type="binding site" description="in other chain" evidence="1">
    <location>
        <position position="26"/>
    </location>
    <ligand>
        <name>ATP</name>
        <dbReference type="ChEBI" id="CHEBI:30616"/>
        <note>ligand shared between dimeric partners</note>
    </ligand>
</feature>
<feature type="binding site" description="in other chain" evidence="1">
    <location>
        <begin position="54"/>
        <end position="56"/>
    </location>
    <ligand>
        <name>ATP</name>
        <dbReference type="ChEBI" id="CHEBI:30616"/>
        <note>ligand shared between dimeric partners</note>
    </ligand>
</feature>
<feature type="binding site" evidence="1">
    <location>
        <position position="57"/>
    </location>
    <ligand>
        <name>Mg(2+)</name>
        <dbReference type="ChEBI" id="CHEBI:18420"/>
    </ligand>
</feature>
<feature type="binding site" description="in other chain" evidence="1">
    <location>
        <position position="74"/>
    </location>
    <ligand>
        <name>ATP</name>
        <dbReference type="ChEBI" id="CHEBI:30616"/>
        <note>ligand shared between dimeric partners</note>
    </ligand>
</feature>
<feature type="binding site" description="in other chain" evidence="1">
    <location>
        <position position="97"/>
    </location>
    <ligand>
        <name>ATP</name>
        <dbReference type="ChEBI" id="CHEBI:30616"/>
        <note>ligand shared between dimeric partners</note>
    </ligand>
</feature>
<feature type="binding site" evidence="1">
    <location>
        <position position="97"/>
    </location>
    <ligand>
        <name>Mg(2+)</name>
        <dbReference type="ChEBI" id="CHEBI:18420"/>
    </ligand>
</feature>
<feature type="binding site" evidence="1">
    <location>
        <begin position="145"/>
        <end position="147"/>
    </location>
    <ligand>
        <name>ATP</name>
        <dbReference type="ChEBI" id="CHEBI:30616"/>
        <note>ligand shared between dimeric partners</note>
    </ligand>
</feature>
<feature type="binding site" evidence="1">
    <location>
        <position position="233"/>
    </location>
    <ligand>
        <name>Mg(2+)</name>
        <dbReference type="ChEBI" id="CHEBI:18420"/>
    </ligand>
</feature>
<feature type="site" description="Important for catalytic activity" evidence="1">
    <location>
        <position position="26"/>
    </location>
</feature>
<gene>
    <name evidence="1" type="primary">selD</name>
    <name type="ordered locus">Sbal195_0177</name>
</gene>
<reference key="1">
    <citation type="submission" date="2007-11" db="EMBL/GenBank/DDBJ databases">
        <title>Complete sequence of chromosome of Shewanella baltica OS195.</title>
        <authorList>
            <consortium name="US DOE Joint Genome Institute"/>
            <person name="Copeland A."/>
            <person name="Lucas S."/>
            <person name="Lapidus A."/>
            <person name="Barry K."/>
            <person name="Glavina del Rio T."/>
            <person name="Dalin E."/>
            <person name="Tice H."/>
            <person name="Pitluck S."/>
            <person name="Chain P."/>
            <person name="Malfatti S."/>
            <person name="Shin M."/>
            <person name="Vergez L."/>
            <person name="Schmutz J."/>
            <person name="Larimer F."/>
            <person name="Land M."/>
            <person name="Hauser L."/>
            <person name="Kyrpides N."/>
            <person name="Kim E."/>
            <person name="Brettar I."/>
            <person name="Rodrigues J."/>
            <person name="Konstantinidis K."/>
            <person name="Klappenbach J."/>
            <person name="Hofle M."/>
            <person name="Tiedje J."/>
            <person name="Richardson P."/>
        </authorList>
    </citation>
    <scope>NUCLEOTIDE SEQUENCE [LARGE SCALE GENOMIC DNA]</scope>
    <source>
        <strain>OS195</strain>
    </source>
</reference>
<proteinExistence type="inferred from homology"/>
<name>SELD_SHEB9</name>
<organism>
    <name type="scientific">Shewanella baltica (strain OS195)</name>
    <dbReference type="NCBI Taxonomy" id="399599"/>
    <lineage>
        <taxon>Bacteria</taxon>
        <taxon>Pseudomonadati</taxon>
        <taxon>Pseudomonadota</taxon>
        <taxon>Gammaproteobacteria</taxon>
        <taxon>Alteromonadales</taxon>
        <taxon>Shewanellaceae</taxon>
        <taxon>Shewanella</taxon>
    </lineage>
</organism>
<comment type="function">
    <text evidence="1">Synthesizes selenophosphate from selenide and ATP.</text>
</comment>
<comment type="catalytic activity">
    <reaction evidence="1">
        <text>hydrogenselenide + ATP + H2O = selenophosphate + AMP + phosphate + 2 H(+)</text>
        <dbReference type="Rhea" id="RHEA:18737"/>
        <dbReference type="ChEBI" id="CHEBI:15377"/>
        <dbReference type="ChEBI" id="CHEBI:15378"/>
        <dbReference type="ChEBI" id="CHEBI:16144"/>
        <dbReference type="ChEBI" id="CHEBI:29317"/>
        <dbReference type="ChEBI" id="CHEBI:30616"/>
        <dbReference type="ChEBI" id="CHEBI:43474"/>
        <dbReference type="ChEBI" id="CHEBI:456215"/>
        <dbReference type="EC" id="2.7.9.3"/>
    </reaction>
</comment>
<comment type="cofactor">
    <cofactor evidence="1">
        <name>Mg(2+)</name>
        <dbReference type="ChEBI" id="CHEBI:18420"/>
    </cofactor>
    <text evidence="1">Binds 1 Mg(2+) ion per monomer.</text>
</comment>
<comment type="subunit">
    <text evidence="1">Homodimer.</text>
</comment>
<comment type="similarity">
    <text evidence="1">Belongs to the selenophosphate synthase 1 family. Class I subfamily.</text>
</comment>
<accession>A9KW79</accession>
<dbReference type="EC" id="2.7.9.3" evidence="1"/>
<dbReference type="EMBL" id="CP000891">
    <property type="protein sequence ID" value="ABX47359.1"/>
    <property type="molecule type" value="Genomic_DNA"/>
</dbReference>
<dbReference type="RefSeq" id="WP_006087518.1">
    <property type="nucleotide sequence ID" value="NC_009997.1"/>
</dbReference>
<dbReference type="SMR" id="A9KW79"/>
<dbReference type="GeneID" id="11770531"/>
<dbReference type="KEGG" id="sbn:Sbal195_0177"/>
<dbReference type="HOGENOM" id="CLU_032859_0_1_6"/>
<dbReference type="Proteomes" id="UP000000770">
    <property type="component" value="Chromosome"/>
</dbReference>
<dbReference type="GO" id="GO:0005737">
    <property type="term" value="C:cytoplasm"/>
    <property type="evidence" value="ECO:0007669"/>
    <property type="project" value="TreeGrafter"/>
</dbReference>
<dbReference type="GO" id="GO:0005524">
    <property type="term" value="F:ATP binding"/>
    <property type="evidence" value="ECO:0007669"/>
    <property type="project" value="UniProtKB-UniRule"/>
</dbReference>
<dbReference type="GO" id="GO:0000287">
    <property type="term" value="F:magnesium ion binding"/>
    <property type="evidence" value="ECO:0007669"/>
    <property type="project" value="UniProtKB-UniRule"/>
</dbReference>
<dbReference type="GO" id="GO:0004756">
    <property type="term" value="F:selenide, water dikinase activity"/>
    <property type="evidence" value="ECO:0007669"/>
    <property type="project" value="UniProtKB-UniRule"/>
</dbReference>
<dbReference type="GO" id="GO:0016260">
    <property type="term" value="P:selenocysteine biosynthetic process"/>
    <property type="evidence" value="ECO:0007669"/>
    <property type="project" value="InterPro"/>
</dbReference>
<dbReference type="CDD" id="cd02195">
    <property type="entry name" value="SelD"/>
    <property type="match status" value="1"/>
</dbReference>
<dbReference type="FunFam" id="3.30.1330.10:FF:000003">
    <property type="entry name" value="Selenide, water dikinase"/>
    <property type="match status" value="1"/>
</dbReference>
<dbReference type="FunFam" id="3.90.650.10:FF:000004">
    <property type="entry name" value="Selenide, water dikinase"/>
    <property type="match status" value="1"/>
</dbReference>
<dbReference type="Gene3D" id="3.90.650.10">
    <property type="entry name" value="PurM-like C-terminal domain"/>
    <property type="match status" value="1"/>
</dbReference>
<dbReference type="Gene3D" id="3.30.1330.10">
    <property type="entry name" value="PurM-like, N-terminal domain"/>
    <property type="match status" value="1"/>
</dbReference>
<dbReference type="HAMAP" id="MF_00625">
    <property type="entry name" value="SelD"/>
    <property type="match status" value="1"/>
</dbReference>
<dbReference type="InterPro" id="IPR010918">
    <property type="entry name" value="PurM-like_C_dom"/>
</dbReference>
<dbReference type="InterPro" id="IPR036676">
    <property type="entry name" value="PurM-like_C_sf"/>
</dbReference>
<dbReference type="InterPro" id="IPR016188">
    <property type="entry name" value="PurM-like_N"/>
</dbReference>
<dbReference type="InterPro" id="IPR036921">
    <property type="entry name" value="PurM-like_N_sf"/>
</dbReference>
<dbReference type="InterPro" id="IPR023061">
    <property type="entry name" value="SelD_I"/>
</dbReference>
<dbReference type="InterPro" id="IPR004536">
    <property type="entry name" value="SPS/SelD"/>
</dbReference>
<dbReference type="NCBIfam" id="NF002098">
    <property type="entry name" value="PRK00943.1"/>
    <property type="match status" value="1"/>
</dbReference>
<dbReference type="NCBIfam" id="TIGR00476">
    <property type="entry name" value="selD"/>
    <property type="match status" value="1"/>
</dbReference>
<dbReference type="PANTHER" id="PTHR10256:SF0">
    <property type="entry name" value="INACTIVE SELENIDE, WATER DIKINASE-LIKE PROTEIN-RELATED"/>
    <property type="match status" value="1"/>
</dbReference>
<dbReference type="PANTHER" id="PTHR10256">
    <property type="entry name" value="SELENIDE, WATER DIKINASE"/>
    <property type="match status" value="1"/>
</dbReference>
<dbReference type="Pfam" id="PF00586">
    <property type="entry name" value="AIRS"/>
    <property type="match status" value="1"/>
</dbReference>
<dbReference type="Pfam" id="PF02769">
    <property type="entry name" value="AIRS_C"/>
    <property type="match status" value="1"/>
</dbReference>
<dbReference type="PIRSF" id="PIRSF036407">
    <property type="entry name" value="Selenphspht_syn"/>
    <property type="match status" value="1"/>
</dbReference>
<dbReference type="SUPFAM" id="SSF56042">
    <property type="entry name" value="PurM C-terminal domain-like"/>
    <property type="match status" value="1"/>
</dbReference>
<dbReference type="SUPFAM" id="SSF55326">
    <property type="entry name" value="PurM N-terminal domain-like"/>
    <property type="match status" value="1"/>
</dbReference>
<evidence type="ECO:0000255" key="1">
    <source>
        <dbReference type="HAMAP-Rule" id="MF_00625"/>
    </source>
</evidence>